<feature type="chain" id="PRO_0000062097" description="Large ribosomal subunit protein uL16">
    <location>
        <begin position="1"/>
        <end position="136"/>
    </location>
</feature>
<evidence type="ECO:0000255" key="1">
    <source>
        <dbReference type="HAMAP-Rule" id="MF_01342"/>
    </source>
</evidence>
<evidence type="ECO:0000305" key="2"/>
<reference key="1">
    <citation type="journal article" date="2006" name="J. Bacteriol.">
        <title>Comparative genomic analysis of three strains of Ehrlichia ruminantium reveals an active process of genome size plasticity.</title>
        <authorList>
            <person name="Frutos R."/>
            <person name="Viari A."/>
            <person name="Ferraz C."/>
            <person name="Morgat A."/>
            <person name="Eychenie S."/>
            <person name="Kandassamy Y."/>
            <person name="Chantal I."/>
            <person name="Bensaid A."/>
            <person name="Coissac E."/>
            <person name="Vachiery N."/>
            <person name="Demaille J."/>
            <person name="Martinez D."/>
        </authorList>
    </citation>
    <scope>NUCLEOTIDE SEQUENCE [LARGE SCALE GENOMIC DNA]</scope>
    <source>
        <strain>Gardel</strain>
    </source>
</reference>
<comment type="function">
    <text evidence="1">Binds 23S rRNA and is also seen to make contacts with the A and possibly P site tRNAs.</text>
</comment>
<comment type="subunit">
    <text evidence="1">Part of the 50S ribosomal subunit.</text>
</comment>
<comment type="similarity">
    <text evidence="1">Belongs to the universal ribosomal protein uL16 family.</text>
</comment>
<organism>
    <name type="scientific">Ehrlichia ruminantium (strain Gardel)</name>
    <dbReference type="NCBI Taxonomy" id="302409"/>
    <lineage>
        <taxon>Bacteria</taxon>
        <taxon>Pseudomonadati</taxon>
        <taxon>Pseudomonadota</taxon>
        <taxon>Alphaproteobacteria</taxon>
        <taxon>Rickettsiales</taxon>
        <taxon>Anaplasmataceae</taxon>
        <taxon>Ehrlichia</taxon>
    </lineage>
</organism>
<name>RL16_EHRRG</name>
<dbReference type="EMBL" id="CR925677">
    <property type="protein sequence ID" value="CAI28074.1"/>
    <property type="molecule type" value="Genomic_DNA"/>
</dbReference>
<dbReference type="RefSeq" id="WP_011155282.1">
    <property type="nucleotide sequence ID" value="NC_006831.1"/>
</dbReference>
<dbReference type="SMR" id="Q5FFU7"/>
<dbReference type="GeneID" id="33058430"/>
<dbReference type="KEGG" id="erg:ERGA_CDS_06220"/>
<dbReference type="HOGENOM" id="CLU_078858_2_1_5"/>
<dbReference type="OrthoDB" id="9802589at2"/>
<dbReference type="Proteomes" id="UP000000533">
    <property type="component" value="Chromosome"/>
</dbReference>
<dbReference type="GO" id="GO:1990904">
    <property type="term" value="C:ribonucleoprotein complex"/>
    <property type="evidence" value="ECO:0007669"/>
    <property type="project" value="UniProtKB-KW"/>
</dbReference>
<dbReference type="GO" id="GO:0005840">
    <property type="term" value="C:ribosome"/>
    <property type="evidence" value="ECO:0007669"/>
    <property type="project" value="UniProtKB-KW"/>
</dbReference>
<dbReference type="GO" id="GO:0019843">
    <property type="term" value="F:rRNA binding"/>
    <property type="evidence" value="ECO:0007669"/>
    <property type="project" value="UniProtKB-UniRule"/>
</dbReference>
<dbReference type="GO" id="GO:0003735">
    <property type="term" value="F:structural constituent of ribosome"/>
    <property type="evidence" value="ECO:0007669"/>
    <property type="project" value="InterPro"/>
</dbReference>
<dbReference type="GO" id="GO:0000049">
    <property type="term" value="F:tRNA binding"/>
    <property type="evidence" value="ECO:0007669"/>
    <property type="project" value="UniProtKB-KW"/>
</dbReference>
<dbReference type="GO" id="GO:0006412">
    <property type="term" value="P:translation"/>
    <property type="evidence" value="ECO:0007669"/>
    <property type="project" value="UniProtKB-UniRule"/>
</dbReference>
<dbReference type="CDD" id="cd01433">
    <property type="entry name" value="Ribosomal_L16_L10e"/>
    <property type="match status" value="1"/>
</dbReference>
<dbReference type="FunFam" id="3.90.1170.10:FF:000001">
    <property type="entry name" value="50S ribosomal protein L16"/>
    <property type="match status" value="1"/>
</dbReference>
<dbReference type="Gene3D" id="3.90.1170.10">
    <property type="entry name" value="Ribosomal protein L10e/L16"/>
    <property type="match status" value="1"/>
</dbReference>
<dbReference type="HAMAP" id="MF_01342">
    <property type="entry name" value="Ribosomal_uL16"/>
    <property type="match status" value="1"/>
</dbReference>
<dbReference type="InterPro" id="IPR047873">
    <property type="entry name" value="Ribosomal_uL16"/>
</dbReference>
<dbReference type="InterPro" id="IPR000114">
    <property type="entry name" value="Ribosomal_uL16_bact-type"/>
</dbReference>
<dbReference type="InterPro" id="IPR020798">
    <property type="entry name" value="Ribosomal_uL16_CS"/>
</dbReference>
<dbReference type="InterPro" id="IPR016180">
    <property type="entry name" value="Ribosomal_uL16_dom"/>
</dbReference>
<dbReference type="InterPro" id="IPR036920">
    <property type="entry name" value="Ribosomal_uL16_sf"/>
</dbReference>
<dbReference type="NCBIfam" id="TIGR01164">
    <property type="entry name" value="rplP_bact"/>
    <property type="match status" value="1"/>
</dbReference>
<dbReference type="PANTHER" id="PTHR12220">
    <property type="entry name" value="50S/60S RIBOSOMAL PROTEIN L16"/>
    <property type="match status" value="1"/>
</dbReference>
<dbReference type="PANTHER" id="PTHR12220:SF13">
    <property type="entry name" value="LARGE RIBOSOMAL SUBUNIT PROTEIN UL16M"/>
    <property type="match status" value="1"/>
</dbReference>
<dbReference type="Pfam" id="PF00252">
    <property type="entry name" value="Ribosomal_L16"/>
    <property type="match status" value="1"/>
</dbReference>
<dbReference type="PRINTS" id="PR00060">
    <property type="entry name" value="RIBOSOMALL16"/>
</dbReference>
<dbReference type="SUPFAM" id="SSF54686">
    <property type="entry name" value="Ribosomal protein L16p/L10e"/>
    <property type="match status" value="1"/>
</dbReference>
<dbReference type="PROSITE" id="PS00701">
    <property type="entry name" value="RIBOSOMAL_L16_2"/>
    <property type="match status" value="1"/>
</dbReference>
<gene>
    <name evidence="1" type="primary">rplP</name>
    <name type="ordered locus">ERGA_CDS_06220</name>
</gene>
<keyword id="KW-0687">Ribonucleoprotein</keyword>
<keyword id="KW-0689">Ribosomal protein</keyword>
<keyword id="KW-0694">RNA-binding</keyword>
<keyword id="KW-0699">rRNA-binding</keyword>
<keyword id="KW-0820">tRNA-binding</keyword>
<proteinExistence type="inferred from homology"/>
<protein>
    <recommendedName>
        <fullName evidence="1">Large ribosomal subunit protein uL16</fullName>
    </recommendedName>
    <alternativeName>
        <fullName evidence="2">50S ribosomal protein L16</fullName>
    </alternativeName>
</protein>
<sequence length="136" mass="15208">MFIPKKTKYKKDFKGRISGNAKGGYTLAFGTYGLKSLEPGRLTSKQVESARRSISRTLKRVGKVWIRVFCHTPVSKKPMDVRMGKGKGSIEMWVCKVKPGKILFEISGVSLNLAKEALQKSQAKLPVKCKFISDEL</sequence>
<accession>Q5FFU7</accession>